<feature type="chain" id="PRO_0000297421" description="3-methyl-2-oxobutanoate hydroxymethyltransferase">
    <location>
        <begin position="1"/>
        <end position="269"/>
    </location>
</feature>
<feature type="region of interest" description="Disordered" evidence="2">
    <location>
        <begin position="250"/>
        <end position="269"/>
    </location>
</feature>
<feature type="compositionally biased region" description="Basic and acidic residues" evidence="2">
    <location>
        <begin position="252"/>
        <end position="262"/>
    </location>
</feature>
<feature type="active site" description="Proton acceptor" evidence="1">
    <location>
        <position position="179"/>
    </location>
</feature>
<feature type="binding site" evidence="1">
    <location>
        <begin position="42"/>
        <end position="43"/>
    </location>
    <ligand>
        <name>3-methyl-2-oxobutanoate</name>
        <dbReference type="ChEBI" id="CHEBI:11851"/>
    </ligand>
</feature>
<feature type="binding site" evidence="1">
    <location>
        <position position="42"/>
    </location>
    <ligand>
        <name>Mg(2+)</name>
        <dbReference type="ChEBI" id="CHEBI:18420"/>
    </ligand>
</feature>
<feature type="binding site" evidence="1">
    <location>
        <position position="81"/>
    </location>
    <ligand>
        <name>3-methyl-2-oxobutanoate</name>
        <dbReference type="ChEBI" id="CHEBI:11851"/>
    </ligand>
</feature>
<feature type="binding site" evidence="1">
    <location>
        <position position="81"/>
    </location>
    <ligand>
        <name>Mg(2+)</name>
        <dbReference type="ChEBI" id="CHEBI:18420"/>
    </ligand>
</feature>
<feature type="binding site" evidence="1">
    <location>
        <position position="111"/>
    </location>
    <ligand>
        <name>3-methyl-2-oxobutanoate</name>
        <dbReference type="ChEBI" id="CHEBI:11851"/>
    </ligand>
</feature>
<feature type="binding site" evidence="1">
    <location>
        <position position="113"/>
    </location>
    <ligand>
        <name>Mg(2+)</name>
        <dbReference type="ChEBI" id="CHEBI:18420"/>
    </ligand>
</feature>
<gene>
    <name evidence="1" type="primary">panB</name>
    <name type="ordered locus">rrnAC0878</name>
</gene>
<dbReference type="EC" id="2.1.2.11" evidence="1"/>
<dbReference type="EMBL" id="AY596297">
    <property type="protein sequence ID" value="AAV45856.1"/>
    <property type="status" value="ALT_INIT"/>
    <property type="molecule type" value="Genomic_DNA"/>
</dbReference>
<dbReference type="RefSeq" id="WP_049938831.1">
    <property type="nucleotide sequence ID" value="NC_006396.1"/>
</dbReference>
<dbReference type="SMR" id="Q5V3P6"/>
<dbReference type="STRING" id="272569.rrnAC0878"/>
<dbReference type="PaxDb" id="272569-rrnAC0878"/>
<dbReference type="EnsemblBacteria" id="AAV45856">
    <property type="protein sequence ID" value="AAV45856"/>
    <property type="gene ID" value="rrnAC0878"/>
</dbReference>
<dbReference type="GeneID" id="40151902"/>
<dbReference type="KEGG" id="hma:rrnAC0878"/>
<dbReference type="PATRIC" id="fig|272569.17.peg.1615"/>
<dbReference type="eggNOG" id="arCOG00584">
    <property type="taxonomic scope" value="Archaea"/>
</dbReference>
<dbReference type="HOGENOM" id="CLU_036645_1_0_2"/>
<dbReference type="UniPathway" id="UPA00241"/>
<dbReference type="Proteomes" id="UP000001169">
    <property type="component" value="Chromosome I"/>
</dbReference>
<dbReference type="GO" id="GO:0005737">
    <property type="term" value="C:cytoplasm"/>
    <property type="evidence" value="ECO:0007669"/>
    <property type="project" value="UniProtKB-SubCell"/>
</dbReference>
<dbReference type="GO" id="GO:0003864">
    <property type="term" value="F:3-methyl-2-oxobutanoate hydroxymethyltransferase activity"/>
    <property type="evidence" value="ECO:0007669"/>
    <property type="project" value="UniProtKB-UniRule"/>
</dbReference>
<dbReference type="GO" id="GO:0000287">
    <property type="term" value="F:magnesium ion binding"/>
    <property type="evidence" value="ECO:0007669"/>
    <property type="project" value="TreeGrafter"/>
</dbReference>
<dbReference type="GO" id="GO:0015937">
    <property type="term" value="P:coenzyme A biosynthetic process"/>
    <property type="evidence" value="ECO:0007669"/>
    <property type="project" value="UniProtKB-UniRule"/>
</dbReference>
<dbReference type="GO" id="GO:0015940">
    <property type="term" value="P:pantothenate biosynthetic process"/>
    <property type="evidence" value="ECO:0007669"/>
    <property type="project" value="InterPro"/>
</dbReference>
<dbReference type="CDD" id="cd06557">
    <property type="entry name" value="KPHMT-like"/>
    <property type="match status" value="1"/>
</dbReference>
<dbReference type="FunFam" id="3.20.20.60:FF:000003">
    <property type="entry name" value="3-methyl-2-oxobutanoate hydroxymethyltransferase"/>
    <property type="match status" value="1"/>
</dbReference>
<dbReference type="Gene3D" id="3.20.20.60">
    <property type="entry name" value="Phosphoenolpyruvate-binding domains"/>
    <property type="match status" value="1"/>
</dbReference>
<dbReference type="HAMAP" id="MF_00156">
    <property type="entry name" value="PanB"/>
    <property type="match status" value="1"/>
</dbReference>
<dbReference type="InterPro" id="IPR003700">
    <property type="entry name" value="Pantoate_hydroxy_MeTrfase"/>
</dbReference>
<dbReference type="InterPro" id="IPR015813">
    <property type="entry name" value="Pyrv/PenolPyrv_kinase-like_dom"/>
</dbReference>
<dbReference type="InterPro" id="IPR040442">
    <property type="entry name" value="Pyrv_kinase-like_dom_sf"/>
</dbReference>
<dbReference type="NCBIfam" id="TIGR00222">
    <property type="entry name" value="panB"/>
    <property type="match status" value="1"/>
</dbReference>
<dbReference type="NCBIfam" id="NF001452">
    <property type="entry name" value="PRK00311.1"/>
    <property type="match status" value="1"/>
</dbReference>
<dbReference type="PANTHER" id="PTHR20881">
    <property type="entry name" value="3-METHYL-2-OXOBUTANOATE HYDROXYMETHYLTRANSFERASE"/>
    <property type="match status" value="1"/>
</dbReference>
<dbReference type="PANTHER" id="PTHR20881:SF0">
    <property type="entry name" value="3-METHYL-2-OXOBUTANOATE HYDROXYMETHYLTRANSFERASE"/>
    <property type="match status" value="1"/>
</dbReference>
<dbReference type="Pfam" id="PF02548">
    <property type="entry name" value="Pantoate_transf"/>
    <property type="match status" value="1"/>
</dbReference>
<dbReference type="PIRSF" id="PIRSF000388">
    <property type="entry name" value="Pantoate_hydroxy_MeTrfase"/>
    <property type="match status" value="1"/>
</dbReference>
<dbReference type="SUPFAM" id="SSF51621">
    <property type="entry name" value="Phosphoenolpyruvate/pyruvate domain"/>
    <property type="match status" value="1"/>
</dbReference>
<name>PANB_HALMA</name>
<accession>Q5V3P6</accession>
<organism>
    <name type="scientific">Haloarcula marismortui (strain ATCC 43049 / DSM 3752 / JCM 8966 / VKM B-1809)</name>
    <name type="common">Halobacterium marismortui</name>
    <dbReference type="NCBI Taxonomy" id="272569"/>
    <lineage>
        <taxon>Archaea</taxon>
        <taxon>Methanobacteriati</taxon>
        <taxon>Methanobacteriota</taxon>
        <taxon>Stenosarchaea group</taxon>
        <taxon>Halobacteria</taxon>
        <taxon>Halobacteriales</taxon>
        <taxon>Haloarculaceae</taxon>
        <taxon>Haloarcula</taxon>
    </lineage>
</organism>
<sequence>MPTVRDLQAMAGEEPITMLTAYDAVTASIVDDTGVDVILVGDSMGNAVLGHDDTLPVTLDEMASRVGAVARGADDALVVADMPFLSFGAHESESIQNCGRMLKEEGANAIKLESGPHTVELTERLTELGIPTMAHLGLTPQSVNQTGYTRQATGREEAEEILDLAREHEAAGAFALVLEHIPANLAAKVTEAVDIPTIGIGAGGDCDGQVLVFTDVVGLSESSPPFAEQFGDVRGEVADAVDEYIDAVESGEFPRESHSHTEDELDDLY</sequence>
<reference key="1">
    <citation type="journal article" date="2004" name="Genome Res.">
        <title>Genome sequence of Haloarcula marismortui: a halophilic archaeon from the Dead Sea.</title>
        <authorList>
            <person name="Baliga N.S."/>
            <person name="Bonneau R."/>
            <person name="Facciotti M.T."/>
            <person name="Pan M."/>
            <person name="Glusman G."/>
            <person name="Deutsch E.W."/>
            <person name="Shannon P."/>
            <person name="Chiu Y."/>
            <person name="Weng R.S."/>
            <person name="Gan R.R."/>
            <person name="Hung P."/>
            <person name="Date S.V."/>
            <person name="Marcotte E."/>
            <person name="Hood L."/>
            <person name="Ng W.V."/>
        </authorList>
    </citation>
    <scope>NUCLEOTIDE SEQUENCE [LARGE SCALE GENOMIC DNA]</scope>
    <source>
        <strain>ATCC 43049 / DSM 3752 / JCM 8966 / VKM B-1809</strain>
    </source>
</reference>
<keyword id="KW-0173">Coenzyme A biosynthesis</keyword>
<keyword id="KW-0963">Cytoplasm</keyword>
<keyword id="KW-0460">Magnesium</keyword>
<keyword id="KW-0479">Metal-binding</keyword>
<keyword id="KW-1185">Reference proteome</keyword>
<keyword id="KW-0808">Transferase</keyword>
<proteinExistence type="inferred from homology"/>
<protein>
    <recommendedName>
        <fullName evidence="1">3-methyl-2-oxobutanoate hydroxymethyltransferase</fullName>
        <ecNumber evidence="1">2.1.2.11</ecNumber>
    </recommendedName>
    <alternativeName>
        <fullName evidence="1">Ketopantoate hydroxymethyltransferase</fullName>
        <shortName evidence="1">KPHMT</shortName>
    </alternativeName>
</protein>
<comment type="function">
    <text evidence="1">Catalyzes the reversible reaction in which hydroxymethyl group from 5,10-methylenetetrahydrofolate is transferred onto alpha-ketoisovalerate to form ketopantoate.</text>
</comment>
<comment type="catalytic activity">
    <reaction evidence="1">
        <text>3-methyl-2-oxobutanoate + (6R)-5,10-methylene-5,6,7,8-tetrahydrofolate + H2O = 2-dehydropantoate + (6S)-5,6,7,8-tetrahydrofolate</text>
        <dbReference type="Rhea" id="RHEA:11824"/>
        <dbReference type="ChEBI" id="CHEBI:11561"/>
        <dbReference type="ChEBI" id="CHEBI:11851"/>
        <dbReference type="ChEBI" id="CHEBI:15377"/>
        <dbReference type="ChEBI" id="CHEBI:15636"/>
        <dbReference type="ChEBI" id="CHEBI:57453"/>
        <dbReference type="EC" id="2.1.2.11"/>
    </reaction>
</comment>
<comment type="cofactor">
    <cofactor evidence="1">
        <name>Mg(2+)</name>
        <dbReference type="ChEBI" id="CHEBI:18420"/>
    </cofactor>
    <text evidence="1">Binds 1 Mg(2+) ion per subunit.</text>
</comment>
<comment type="pathway">
    <text evidence="1">Cofactor biosynthesis; coenzyme A biosynthesis.</text>
</comment>
<comment type="subunit">
    <text evidence="1">Homodecamer; pentamer of dimers.</text>
</comment>
<comment type="subcellular location">
    <subcellularLocation>
        <location evidence="1">Cytoplasm</location>
    </subcellularLocation>
</comment>
<comment type="similarity">
    <text evidence="1">Belongs to the PanB family.</text>
</comment>
<comment type="sequence caution" evidence="3">
    <conflict type="erroneous initiation">
        <sequence resource="EMBL-CDS" id="AAV45856"/>
    </conflict>
</comment>
<evidence type="ECO:0000255" key="1">
    <source>
        <dbReference type="HAMAP-Rule" id="MF_00156"/>
    </source>
</evidence>
<evidence type="ECO:0000256" key="2">
    <source>
        <dbReference type="SAM" id="MobiDB-lite"/>
    </source>
</evidence>
<evidence type="ECO:0000305" key="3"/>